<comment type="function">
    <text evidence="1 5">As a component of the LINC (LInker of Nucleoskeleton and Cytoskeleton) complex, involved in the connection between the nuclear lamina and the cytoskeleton. The nucleocytoplasmic interactions established by the LINC complex play an important role in the transmission of mechanical forces across the nuclear envelope and in nuclear movement and positioning (By similarity). Behaves as a kinesin cargo, providing a functional binding site for kinesin-1 at the nuclear envelope. Hence may contribute to the establishment of secretory epithelial morphology, by promoting kinesin-dependent apical migration of the centrosome and Golgi apparatus and basal localization of the nucleus.</text>
</comment>
<comment type="subunit">
    <text evidence="1 5">Core component of LINC complexes which are composed of inner nuclear membrane SUN domain-containing proteins coupled to outer nuclear membrane KASH domain-containing nesprins. SUN and KASH domain-containing proteins seem to bind each other promiscuously; however, differentially expression of LINC complex constituents can give rise to specific assemblies. Probably part of a SUN1-containing LINC complex. Interacts with kinesins KIF5B and KLC1.</text>
</comment>
<comment type="interaction">
    <interactant intactId="EBI-15752280">
        <id>Q8CII8</id>
    </interactant>
    <interactant intactId="EBI-355878">
        <id>P33176</id>
        <label>KIF5B</label>
    </interactant>
    <organismsDiffer>true</organismsDiffer>
    <experiments>2</experiments>
</comment>
<comment type="subcellular location">
    <subcellularLocation>
        <location evidence="5 6">Nucleus outer membrane</location>
        <topology evidence="5 6">Single-pass type IV membrane protein</topology>
    </subcellularLocation>
    <text>Localization at the nucleus outer membrane location requires the presence of SUN1.</text>
</comment>
<comment type="tissue specificity">
    <text evidence="5 6">Expressed in secretory epithelial cells, such as those found in exocrine pancreas, bulbourethral gland, mammary gland and salivary gland (at protein level). Also expressed in the cochlea, where it is restricted primarily to the 3 rows of outer hair cells and 1 row of inner hair cells (at protein level). Not detected in other cells of the cochlea, including Deiter's cells and pillar cells, nor in liver and kidney (at protein level).</text>
</comment>
<comment type="developmental stage">
    <text evidence="5">In the cochlea, low expression at P0 and P15, then rises significantly by P30 and remains steady. In the HC11 cell line model, up-regulated during differentiation of mammary cells into milk-secreting cells (at protein level).</text>
</comment>
<comment type="domain">
    <text evidence="5">The KASH domain, which contains a transmembrane domain, mediates the nuclear envelope targeting and is involved in the binding to SUN1 and SUN2 through recognition of their SUN domains.</text>
</comment>
<comment type="PTM">
    <text evidence="2">The disulfid bond with SUN1 or SUN2 is required for stability of the respective LINC complex under tensile forces.</text>
</comment>
<comment type="disruption phenotype">
    <text evidence="6">Mice are born at the expected Mendelian rate and look overtly normal. In the cochlea, outer hair cells form, but appear to degenerate as hearing matures. Inner hair cells remain intact. Hearing loss is already detected at P15 and progresses at all frequencies by P60.</text>
</comment>
<comment type="similarity">
    <text evidence="7">Belongs to the nesprin family.</text>
</comment>
<accession>Q8CII8</accession>
<accession>Q6PH99</accession>
<accession>Q99J42</accession>
<dbReference type="EMBL" id="BC004761">
    <property type="protein sequence ID" value="AAH04761.2"/>
    <property type="molecule type" value="mRNA"/>
</dbReference>
<dbReference type="EMBL" id="BC023803">
    <property type="protein sequence ID" value="AAH23803.1"/>
    <property type="molecule type" value="mRNA"/>
</dbReference>
<dbReference type="EMBL" id="BC056649">
    <property type="protein sequence ID" value="AAH56649.1"/>
    <property type="molecule type" value="mRNA"/>
</dbReference>
<dbReference type="CCDS" id="CCDS21086.1"/>
<dbReference type="RefSeq" id="NP_705805.1">
    <property type="nucleotide sequence ID" value="NM_153577.3"/>
</dbReference>
<dbReference type="SMR" id="Q8CII8"/>
<dbReference type="DIP" id="DIP-48702N"/>
<dbReference type="FunCoup" id="Q8CII8">
    <property type="interactions" value="36"/>
</dbReference>
<dbReference type="IntAct" id="Q8CII8">
    <property type="interactions" value="6"/>
</dbReference>
<dbReference type="STRING" id="10090.ENSMUSP00000055874"/>
<dbReference type="GlyGen" id="Q8CII8">
    <property type="glycosylation" value="1 site"/>
</dbReference>
<dbReference type="iPTMnet" id="Q8CII8"/>
<dbReference type="PhosphoSitePlus" id="Q8CII8"/>
<dbReference type="PaxDb" id="10090-ENSMUSP00000055874"/>
<dbReference type="ProteomicsDB" id="254707"/>
<dbReference type="Antibodypedia" id="34811">
    <property type="antibodies" value="109 antibodies from 17 providers"/>
</dbReference>
<dbReference type="DNASU" id="233066"/>
<dbReference type="Ensembl" id="ENSMUST00000054594.15">
    <property type="protein sequence ID" value="ENSMUSP00000055874.9"/>
    <property type="gene ID" value="ENSMUSG00000019737.15"/>
</dbReference>
<dbReference type="GeneID" id="233066"/>
<dbReference type="KEGG" id="mmu:233066"/>
<dbReference type="UCSC" id="uc009gec.1">
    <property type="organism name" value="mouse"/>
</dbReference>
<dbReference type="AGR" id="MGI:2141950"/>
<dbReference type="CTD" id="163183"/>
<dbReference type="MGI" id="MGI:2141950">
    <property type="gene designation" value="Syne4"/>
</dbReference>
<dbReference type="VEuPathDB" id="HostDB:ENSMUSG00000019737"/>
<dbReference type="eggNOG" id="ENOG502SZGW">
    <property type="taxonomic scope" value="Eukaryota"/>
</dbReference>
<dbReference type="GeneTree" id="ENSGT00510000049061"/>
<dbReference type="HOGENOM" id="CLU_034166_1_0_1"/>
<dbReference type="InParanoid" id="Q8CII8"/>
<dbReference type="OMA" id="CEHPASG"/>
<dbReference type="OrthoDB" id="8676767at2759"/>
<dbReference type="PhylomeDB" id="Q8CII8"/>
<dbReference type="BioGRID-ORCS" id="233066">
    <property type="hits" value="4 hits in 79 CRISPR screens"/>
</dbReference>
<dbReference type="ChiTaRS" id="Syne4">
    <property type="organism name" value="mouse"/>
</dbReference>
<dbReference type="PRO" id="PR:Q8CII8"/>
<dbReference type="Proteomes" id="UP000000589">
    <property type="component" value="Chromosome 7"/>
</dbReference>
<dbReference type="RNAct" id="Q8CII8">
    <property type="molecule type" value="protein"/>
</dbReference>
<dbReference type="Bgee" id="ENSMUSG00000019737">
    <property type="expression patterns" value="Expressed in metanephric proximal tubule and 186 other cell types or tissues"/>
</dbReference>
<dbReference type="ExpressionAtlas" id="Q8CII8">
    <property type="expression patterns" value="baseline and differential"/>
</dbReference>
<dbReference type="GO" id="GO:0034993">
    <property type="term" value="C:meiotic nuclear membrane microtubule tethering complex"/>
    <property type="evidence" value="ECO:0007669"/>
    <property type="project" value="InterPro"/>
</dbReference>
<dbReference type="GO" id="GO:0005640">
    <property type="term" value="C:nuclear outer membrane"/>
    <property type="evidence" value="ECO:0000314"/>
    <property type="project" value="UniProtKB"/>
</dbReference>
<dbReference type="GO" id="GO:0045198">
    <property type="term" value="P:establishment of epithelial cell apical/basal polarity"/>
    <property type="evidence" value="ECO:0000315"/>
    <property type="project" value="UniProtKB"/>
</dbReference>
<dbReference type="InterPro" id="IPR012315">
    <property type="entry name" value="KASH"/>
</dbReference>
<dbReference type="InterPro" id="IPR030268">
    <property type="entry name" value="SYNE4"/>
</dbReference>
<dbReference type="PANTHER" id="PTHR21640">
    <property type="match status" value="1"/>
</dbReference>
<dbReference type="PANTHER" id="PTHR21640:SF1">
    <property type="entry name" value="NESPRIN-4"/>
    <property type="match status" value="1"/>
</dbReference>
<dbReference type="Pfam" id="PF10541">
    <property type="entry name" value="KASH"/>
    <property type="match status" value="1"/>
</dbReference>
<dbReference type="SMART" id="SM01249">
    <property type="entry name" value="KASH"/>
    <property type="match status" value="1"/>
</dbReference>
<dbReference type="SUPFAM" id="SSF46966">
    <property type="entry name" value="Spectrin repeat"/>
    <property type="match status" value="1"/>
</dbReference>
<dbReference type="PROSITE" id="PS51049">
    <property type="entry name" value="KASH"/>
    <property type="match status" value="1"/>
</dbReference>
<proteinExistence type="evidence at protein level"/>
<sequence length="388" mass="42024">MALVPPLGREFPPEPVNCPLAAPRELDVVGGTICPAPEEETSRPEQVQASLGLPEHCMGELKSTESATSPSRLPLASSHEHQDGGKPCEHSDSGLEVLEAEQDSLHLCLLRLNFRLQDLERGLGSWTLAHNRIVQMQALQAELRGAAERVDALLAFGEGLAERSEPRAWASLEQVLRALGTHRDTIFQRLWQLQAQLISYSLVLEKANLLDQDLEVEGDSDGPAAGGVWGPWAPSTFPTPAELEWDPAGDVGGLGPSGQKISRIPGAPCELCGYRGPQSSGQGLEDLLSLGLGHRKHLAAHHRRRLRKPQDRKRQVSPSLPDAMLEVDRGVPAPASKRPLTLFFLLLFLLLVGATLLLPLSGVSCCSHARLARTPYLVLSYVNGLPPI</sequence>
<protein>
    <recommendedName>
        <fullName>Nesprin-4</fullName>
    </recommendedName>
    <alternativeName>
        <fullName>KASH domain-containing protein 4</fullName>
        <shortName>KASH4</shortName>
    </alternativeName>
    <alternativeName>
        <fullName>Nuclear envelope spectrin repeat protein 4</fullName>
    </alternativeName>
</protein>
<feature type="chain" id="PRO_0000306265" description="Nesprin-4">
    <location>
        <begin position="1"/>
        <end position="388"/>
    </location>
</feature>
<feature type="topological domain" description="Cytoplasmic" evidence="3">
    <location>
        <begin position="1"/>
        <end position="339"/>
    </location>
</feature>
<feature type="transmembrane region" description="Helical; Anchor for type IV membrane protein" evidence="3">
    <location>
        <begin position="340"/>
        <end position="360"/>
    </location>
</feature>
<feature type="topological domain" description="Perinuclear space" evidence="3">
    <location>
        <begin position="361"/>
        <end position="388"/>
    </location>
</feature>
<feature type="domain" description="KASH" evidence="3">
    <location>
        <begin position="331"/>
        <end position="388"/>
    </location>
</feature>
<feature type="region of interest" description="Disordered" evidence="4">
    <location>
        <begin position="60"/>
        <end position="92"/>
    </location>
</feature>
<feature type="compositionally biased region" description="Basic and acidic residues" evidence="4">
    <location>
        <begin position="78"/>
        <end position="92"/>
    </location>
</feature>
<feature type="disulfide bond" description="Interchain (with C-577 in SUN2); alternate" evidence="2">
    <location>
        <position position="365"/>
    </location>
</feature>
<feature type="disulfide bond" description="Interchain (with C-759 in SUN1)" evidence="2">
    <location>
        <position position="365"/>
    </location>
</feature>
<feature type="sequence conflict" description="In Ref. 1; AAH04761/AAH56649." evidence="7" ref="1">
    <original>H</original>
    <variation>Q</variation>
    <location>
        <position position="56"/>
    </location>
</feature>
<feature type="sequence conflict" description="In Ref. 1; AAH56649." evidence="7" ref="1">
    <original>T</original>
    <variation>I</variation>
    <location>
        <position position="239"/>
    </location>
</feature>
<evidence type="ECO:0000250" key="1"/>
<evidence type="ECO:0000250" key="2">
    <source>
        <dbReference type="UniProtKB" id="Q8WXH0"/>
    </source>
</evidence>
<evidence type="ECO:0000255" key="3">
    <source>
        <dbReference type="PROSITE-ProRule" id="PRU00385"/>
    </source>
</evidence>
<evidence type="ECO:0000256" key="4">
    <source>
        <dbReference type="SAM" id="MobiDB-lite"/>
    </source>
</evidence>
<evidence type="ECO:0000269" key="5">
    <source>
    </source>
</evidence>
<evidence type="ECO:0000269" key="6">
    <source>
    </source>
</evidence>
<evidence type="ECO:0000305" key="7"/>
<keyword id="KW-1015">Disulfide bond</keyword>
<keyword id="KW-0472">Membrane</keyword>
<keyword id="KW-0539">Nucleus</keyword>
<keyword id="KW-1185">Reference proteome</keyword>
<keyword id="KW-0812">Transmembrane</keyword>
<keyword id="KW-1133">Transmembrane helix</keyword>
<gene>
    <name type="primary">Syne4</name>
</gene>
<organism>
    <name type="scientific">Mus musculus</name>
    <name type="common">Mouse</name>
    <dbReference type="NCBI Taxonomy" id="10090"/>
    <lineage>
        <taxon>Eukaryota</taxon>
        <taxon>Metazoa</taxon>
        <taxon>Chordata</taxon>
        <taxon>Craniata</taxon>
        <taxon>Vertebrata</taxon>
        <taxon>Euteleostomi</taxon>
        <taxon>Mammalia</taxon>
        <taxon>Eutheria</taxon>
        <taxon>Euarchontoglires</taxon>
        <taxon>Glires</taxon>
        <taxon>Rodentia</taxon>
        <taxon>Myomorpha</taxon>
        <taxon>Muroidea</taxon>
        <taxon>Muridae</taxon>
        <taxon>Murinae</taxon>
        <taxon>Mus</taxon>
        <taxon>Mus</taxon>
    </lineage>
</organism>
<name>SYNE4_MOUSE</name>
<reference key="1">
    <citation type="journal article" date="2004" name="Genome Res.">
        <title>The status, quality, and expansion of the NIH full-length cDNA project: the Mammalian Gene Collection (MGC).</title>
        <authorList>
            <consortium name="The MGC Project Team"/>
        </authorList>
    </citation>
    <scope>NUCLEOTIDE SEQUENCE [LARGE SCALE MRNA]</scope>
    <source>
        <strain>Czech II</strain>
        <strain>FVB/N</strain>
        <tissue>Mammary tumor</tissue>
    </source>
</reference>
<reference key="2">
    <citation type="journal article" date="2009" name="Proc. Natl. Acad. Sci. U.S.A.">
        <title>Nesprin 4 is an outer nuclear membrane protein that can induce kinesin-mediated cell polarization.</title>
        <authorList>
            <person name="Roux K.J."/>
            <person name="Crisp M.L."/>
            <person name="Liu Q."/>
            <person name="Kim D."/>
            <person name="Kozlov S."/>
            <person name="Stewart C.L."/>
            <person name="Burke B."/>
        </authorList>
    </citation>
    <scope>FUNCTION</scope>
    <scope>INTERACTION WITH KIF5B AND KLC1</scope>
    <scope>SUBCELLULAR LOCATION</scope>
    <scope>TOPOLOGY</scope>
    <scope>DOMAIN</scope>
    <scope>TISSUE SPECIFICITY</scope>
    <scope>DEVELOPMENTAL STAGE</scope>
</reference>
<reference key="3">
    <citation type="journal article" date="2013" name="J. Clin. Invest.">
        <title>The LINC complex is essential for hearing.</title>
        <authorList>
            <person name="Horn H.F."/>
            <person name="Brownstein Z."/>
            <person name="Lenz D.R."/>
            <person name="Shivatzki S."/>
            <person name="Dror A.A."/>
            <person name="Dagan-Rosenfeld O."/>
            <person name="Friedman L.M."/>
            <person name="Roux K.J."/>
            <person name="Kozlov S."/>
            <person name="Jeang K.T."/>
            <person name="Frydman M."/>
            <person name="Burke B."/>
            <person name="Stewart C.L."/>
            <person name="Avraham K.B."/>
        </authorList>
    </citation>
    <scope>DISRUPTION PHENOTYPE</scope>
    <scope>POTENTIAL INTERACTION WITH SUN1</scope>
    <scope>SUBCELLULAR LOCATION</scope>
    <scope>TISSUE SPECIFICITY</scope>
</reference>